<proteinExistence type="inferred from homology"/>
<dbReference type="EC" id="3.6.5.n1" evidence="1"/>
<dbReference type="EMBL" id="CP000919">
    <property type="protein sequence ID" value="ACO18510.1"/>
    <property type="molecule type" value="Genomic_DNA"/>
</dbReference>
<dbReference type="RefSeq" id="WP_001047220.1">
    <property type="nucleotide sequence ID" value="NC_012466.1"/>
</dbReference>
<dbReference type="SMR" id="C1CEG3"/>
<dbReference type="KEGG" id="sjj:SPJ_1118"/>
<dbReference type="HOGENOM" id="CLU_009995_3_3_9"/>
<dbReference type="Proteomes" id="UP000002206">
    <property type="component" value="Chromosome"/>
</dbReference>
<dbReference type="GO" id="GO:0005886">
    <property type="term" value="C:plasma membrane"/>
    <property type="evidence" value="ECO:0007669"/>
    <property type="project" value="UniProtKB-SubCell"/>
</dbReference>
<dbReference type="GO" id="GO:0005525">
    <property type="term" value="F:GTP binding"/>
    <property type="evidence" value="ECO:0007669"/>
    <property type="project" value="UniProtKB-UniRule"/>
</dbReference>
<dbReference type="GO" id="GO:0003924">
    <property type="term" value="F:GTPase activity"/>
    <property type="evidence" value="ECO:0007669"/>
    <property type="project" value="UniProtKB-UniRule"/>
</dbReference>
<dbReference type="GO" id="GO:0043022">
    <property type="term" value="F:ribosome binding"/>
    <property type="evidence" value="ECO:0007669"/>
    <property type="project" value="UniProtKB-UniRule"/>
</dbReference>
<dbReference type="GO" id="GO:0003746">
    <property type="term" value="F:translation elongation factor activity"/>
    <property type="evidence" value="ECO:0007669"/>
    <property type="project" value="UniProtKB-UniRule"/>
</dbReference>
<dbReference type="GO" id="GO:0045727">
    <property type="term" value="P:positive regulation of translation"/>
    <property type="evidence" value="ECO:0007669"/>
    <property type="project" value="UniProtKB-UniRule"/>
</dbReference>
<dbReference type="CDD" id="cd03699">
    <property type="entry name" value="EF4_II"/>
    <property type="match status" value="1"/>
</dbReference>
<dbReference type="CDD" id="cd16260">
    <property type="entry name" value="EF4_III"/>
    <property type="match status" value="1"/>
</dbReference>
<dbReference type="CDD" id="cd01890">
    <property type="entry name" value="LepA"/>
    <property type="match status" value="1"/>
</dbReference>
<dbReference type="CDD" id="cd03709">
    <property type="entry name" value="lepA_C"/>
    <property type="match status" value="1"/>
</dbReference>
<dbReference type="FunFam" id="3.40.50.300:FF:000078">
    <property type="entry name" value="Elongation factor 4"/>
    <property type="match status" value="1"/>
</dbReference>
<dbReference type="FunFam" id="2.40.30.10:FF:000015">
    <property type="entry name" value="Translation factor GUF1, mitochondrial"/>
    <property type="match status" value="1"/>
</dbReference>
<dbReference type="FunFam" id="3.30.70.240:FF:000007">
    <property type="entry name" value="Translation factor GUF1, mitochondrial"/>
    <property type="match status" value="1"/>
</dbReference>
<dbReference type="FunFam" id="3.30.70.2570:FF:000001">
    <property type="entry name" value="Translation factor GUF1, mitochondrial"/>
    <property type="match status" value="1"/>
</dbReference>
<dbReference type="FunFam" id="3.30.70.870:FF:000004">
    <property type="entry name" value="Translation factor GUF1, mitochondrial"/>
    <property type="match status" value="1"/>
</dbReference>
<dbReference type="Gene3D" id="3.30.70.240">
    <property type="match status" value="1"/>
</dbReference>
<dbReference type="Gene3D" id="3.30.70.2570">
    <property type="entry name" value="Elongation factor 4, C-terminal domain"/>
    <property type="match status" value="1"/>
</dbReference>
<dbReference type="Gene3D" id="3.30.70.870">
    <property type="entry name" value="Elongation Factor G (Translational Gtpase), domain 3"/>
    <property type="match status" value="1"/>
</dbReference>
<dbReference type="Gene3D" id="3.40.50.300">
    <property type="entry name" value="P-loop containing nucleotide triphosphate hydrolases"/>
    <property type="match status" value="1"/>
</dbReference>
<dbReference type="Gene3D" id="2.40.30.10">
    <property type="entry name" value="Translation factors"/>
    <property type="match status" value="1"/>
</dbReference>
<dbReference type="HAMAP" id="MF_00071">
    <property type="entry name" value="LepA"/>
    <property type="match status" value="1"/>
</dbReference>
<dbReference type="InterPro" id="IPR006297">
    <property type="entry name" value="EF-4"/>
</dbReference>
<dbReference type="InterPro" id="IPR035647">
    <property type="entry name" value="EFG_III/V"/>
</dbReference>
<dbReference type="InterPro" id="IPR000640">
    <property type="entry name" value="EFG_V-like"/>
</dbReference>
<dbReference type="InterPro" id="IPR004161">
    <property type="entry name" value="EFTu-like_2"/>
</dbReference>
<dbReference type="InterPro" id="IPR031157">
    <property type="entry name" value="G_TR_CS"/>
</dbReference>
<dbReference type="InterPro" id="IPR038363">
    <property type="entry name" value="LepA_C_sf"/>
</dbReference>
<dbReference type="InterPro" id="IPR013842">
    <property type="entry name" value="LepA_CTD"/>
</dbReference>
<dbReference type="InterPro" id="IPR035654">
    <property type="entry name" value="LepA_IV"/>
</dbReference>
<dbReference type="InterPro" id="IPR027417">
    <property type="entry name" value="P-loop_NTPase"/>
</dbReference>
<dbReference type="InterPro" id="IPR005225">
    <property type="entry name" value="Small_GTP-bd"/>
</dbReference>
<dbReference type="InterPro" id="IPR000795">
    <property type="entry name" value="T_Tr_GTP-bd_dom"/>
</dbReference>
<dbReference type="InterPro" id="IPR009000">
    <property type="entry name" value="Transl_B-barrel_sf"/>
</dbReference>
<dbReference type="NCBIfam" id="TIGR01393">
    <property type="entry name" value="lepA"/>
    <property type="match status" value="1"/>
</dbReference>
<dbReference type="NCBIfam" id="TIGR00231">
    <property type="entry name" value="small_GTP"/>
    <property type="match status" value="1"/>
</dbReference>
<dbReference type="PANTHER" id="PTHR43512:SF4">
    <property type="entry name" value="TRANSLATION FACTOR GUF1 HOMOLOG, CHLOROPLASTIC"/>
    <property type="match status" value="1"/>
</dbReference>
<dbReference type="PANTHER" id="PTHR43512">
    <property type="entry name" value="TRANSLATION FACTOR GUF1-RELATED"/>
    <property type="match status" value="1"/>
</dbReference>
<dbReference type="Pfam" id="PF00679">
    <property type="entry name" value="EFG_C"/>
    <property type="match status" value="1"/>
</dbReference>
<dbReference type="Pfam" id="PF00009">
    <property type="entry name" value="GTP_EFTU"/>
    <property type="match status" value="1"/>
</dbReference>
<dbReference type="Pfam" id="PF03144">
    <property type="entry name" value="GTP_EFTU_D2"/>
    <property type="match status" value="1"/>
</dbReference>
<dbReference type="Pfam" id="PF06421">
    <property type="entry name" value="LepA_C"/>
    <property type="match status" value="1"/>
</dbReference>
<dbReference type="PRINTS" id="PR00315">
    <property type="entry name" value="ELONGATNFCT"/>
</dbReference>
<dbReference type="SMART" id="SM00838">
    <property type="entry name" value="EFG_C"/>
    <property type="match status" value="1"/>
</dbReference>
<dbReference type="SUPFAM" id="SSF54980">
    <property type="entry name" value="EF-G C-terminal domain-like"/>
    <property type="match status" value="2"/>
</dbReference>
<dbReference type="SUPFAM" id="SSF52540">
    <property type="entry name" value="P-loop containing nucleoside triphosphate hydrolases"/>
    <property type="match status" value="1"/>
</dbReference>
<dbReference type="SUPFAM" id="SSF50447">
    <property type="entry name" value="Translation proteins"/>
    <property type="match status" value="1"/>
</dbReference>
<dbReference type="PROSITE" id="PS00301">
    <property type="entry name" value="G_TR_1"/>
    <property type="match status" value="1"/>
</dbReference>
<dbReference type="PROSITE" id="PS51722">
    <property type="entry name" value="G_TR_2"/>
    <property type="match status" value="1"/>
</dbReference>
<keyword id="KW-1003">Cell membrane</keyword>
<keyword id="KW-0342">GTP-binding</keyword>
<keyword id="KW-0378">Hydrolase</keyword>
<keyword id="KW-0472">Membrane</keyword>
<keyword id="KW-0547">Nucleotide-binding</keyword>
<keyword id="KW-0648">Protein biosynthesis</keyword>
<feature type="chain" id="PRO_1000190832" description="Elongation factor 4">
    <location>
        <begin position="1"/>
        <end position="607"/>
    </location>
</feature>
<feature type="domain" description="tr-type G">
    <location>
        <begin position="11"/>
        <end position="193"/>
    </location>
</feature>
<feature type="binding site" evidence="1">
    <location>
        <begin position="23"/>
        <end position="28"/>
    </location>
    <ligand>
        <name>GTP</name>
        <dbReference type="ChEBI" id="CHEBI:37565"/>
    </ligand>
</feature>
<feature type="binding site" evidence="1">
    <location>
        <begin position="140"/>
        <end position="143"/>
    </location>
    <ligand>
        <name>GTP</name>
        <dbReference type="ChEBI" id="CHEBI:37565"/>
    </ligand>
</feature>
<sequence length="607" mass="67540">MNLEELKKRQGKIRNFSIIAHIDHGKSTLADRILEKTETVSSREMQAQLLDSMDLERERGITIKLNAIELNYTAKDGETYIFHLIDTPGHVDFTYEVSRSLAACEGAILVVDAAQGIEAQTLANVYLALDNDLEIMPIINKIDLPAADPESVRTEIEDVIGLDASEAVLASAKAGIGIEEILEQIVEKVPAPTGDVTAPLKALIFDSVYDAYRGVILQVRVMDGVVKPGDKIQLMSNSKTFDVAEVGIFTPKAVGRDFLATGDVGYIAASIKTVQDTRVGDTVTLATNPAAEPLHGYKQMNPMVFAGLYPIESNKYNDLREALEKLQLNDASLQFEPETSQALGFGFRCGFLGLLHMDVIQERLEREFNIDLIMTAPSVIYKVNLTDGESMDVSNPSEFPDPTKIATIEEPYVKAQIMVPQEFVGAVMELAQRKRGDFVTMDYIDDNRVNVIYQIPLAEIVFDFFDKLKSSTRGYASFDYELSEYRPSKLVKMDILLNGDKVDALSFIVHKDFAYERGKLIVDKLKKIIPRQQFEVPIQAAIGHKIVARTDIKALRKNVLAKCYGGDVSRKRKLLEKQKAGKKRMKSIGSVEVPQEAFLSVLSMDEE</sequence>
<evidence type="ECO:0000255" key="1">
    <source>
        <dbReference type="HAMAP-Rule" id="MF_00071"/>
    </source>
</evidence>
<reference key="1">
    <citation type="journal article" date="2010" name="Genome Biol.">
        <title>Structure and dynamics of the pan-genome of Streptococcus pneumoniae and closely related species.</title>
        <authorList>
            <person name="Donati C."/>
            <person name="Hiller N.L."/>
            <person name="Tettelin H."/>
            <person name="Muzzi A."/>
            <person name="Croucher N.J."/>
            <person name="Angiuoli S.V."/>
            <person name="Oggioni M."/>
            <person name="Dunning Hotopp J.C."/>
            <person name="Hu F.Z."/>
            <person name="Riley D.R."/>
            <person name="Covacci A."/>
            <person name="Mitchell T.J."/>
            <person name="Bentley S.D."/>
            <person name="Kilian M."/>
            <person name="Ehrlich G.D."/>
            <person name="Rappuoli R."/>
            <person name="Moxon E.R."/>
            <person name="Masignani V."/>
        </authorList>
    </citation>
    <scope>NUCLEOTIDE SEQUENCE [LARGE SCALE GENOMIC DNA]</scope>
    <source>
        <strain>JJA</strain>
    </source>
</reference>
<protein>
    <recommendedName>
        <fullName evidence="1">Elongation factor 4</fullName>
        <shortName evidence="1">EF-4</shortName>
        <ecNumber evidence="1">3.6.5.n1</ecNumber>
    </recommendedName>
    <alternativeName>
        <fullName evidence="1">Ribosomal back-translocase LepA</fullName>
    </alternativeName>
</protein>
<organism>
    <name type="scientific">Streptococcus pneumoniae (strain JJA)</name>
    <dbReference type="NCBI Taxonomy" id="488222"/>
    <lineage>
        <taxon>Bacteria</taxon>
        <taxon>Bacillati</taxon>
        <taxon>Bacillota</taxon>
        <taxon>Bacilli</taxon>
        <taxon>Lactobacillales</taxon>
        <taxon>Streptococcaceae</taxon>
        <taxon>Streptococcus</taxon>
    </lineage>
</organism>
<gene>
    <name evidence="1" type="primary">lepA</name>
    <name type="ordered locus">SPJ_1118</name>
</gene>
<accession>C1CEG3</accession>
<name>LEPA_STRZJ</name>
<comment type="function">
    <text evidence="1">Required for accurate and efficient protein synthesis under certain stress conditions. May act as a fidelity factor of the translation reaction, by catalyzing a one-codon backward translocation of tRNAs on improperly translocated ribosomes. Back-translocation proceeds from a post-translocation (POST) complex to a pre-translocation (PRE) complex, thus giving elongation factor G a second chance to translocate the tRNAs correctly. Binds to ribosomes in a GTP-dependent manner.</text>
</comment>
<comment type="catalytic activity">
    <reaction evidence="1">
        <text>GTP + H2O = GDP + phosphate + H(+)</text>
        <dbReference type="Rhea" id="RHEA:19669"/>
        <dbReference type="ChEBI" id="CHEBI:15377"/>
        <dbReference type="ChEBI" id="CHEBI:15378"/>
        <dbReference type="ChEBI" id="CHEBI:37565"/>
        <dbReference type="ChEBI" id="CHEBI:43474"/>
        <dbReference type="ChEBI" id="CHEBI:58189"/>
        <dbReference type="EC" id="3.6.5.n1"/>
    </reaction>
</comment>
<comment type="subcellular location">
    <subcellularLocation>
        <location evidence="1">Cell membrane</location>
        <topology evidence="1">Peripheral membrane protein</topology>
        <orientation evidence="1">Cytoplasmic side</orientation>
    </subcellularLocation>
</comment>
<comment type="similarity">
    <text evidence="1">Belongs to the TRAFAC class translation factor GTPase superfamily. Classic translation factor GTPase family. LepA subfamily.</text>
</comment>